<gene>
    <name evidence="11" type="primary">etp1</name>
    <name type="ORF">SPAC22E12.10c</name>
</gene>
<evidence type="ECO:0000250" key="1">
    <source>
        <dbReference type="UniProtKB" id="P12946"/>
    </source>
</evidence>
<evidence type="ECO:0000250" key="2">
    <source>
        <dbReference type="UniProtKB" id="P40086"/>
    </source>
</evidence>
<evidence type="ECO:0000250" key="3">
    <source>
        <dbReference type="UniProtKB" id="Q12184"/>
    </source>
</evidence>
<evidence type="ECO:0000255" key="4"/>
<evidence type="ECO:0000255" key="5">
    <source>
        <dbReference type="PROSITE-ProRule" id="PRU00465"/>
    </source>
</evidence>
<evidence type="ECO:0000269" key="6">
    <source>
    </source>
</evidence>
<evidence type="ECO:0000269" key="7">
    <source>
    </source>
</evidence>
<evidence type="ECO:0000269" key="8">
    <source>
    </source>
</evidence>
<evidence type="ECO:0000269" key="9">
    <source>
    </source>
</evidence>
<evidence type="ECO:0000269" key="10">
    <source>
    </source>
</evidence>
<evidence type="ECO:0000303" key="11">
    <source>
    </source>
</evidence>
<evidence type="ECO:0000305" key="12"/>
<evidence type="ECO:0007744" key="13">
    <source>
        <dbReference type="PDB" id="2WLB"/>
    </source>
</evidence>
<evidence type="ECO:0007829" key="14">
    <source>
        <dbReference type="PDB" id="2WLB"/>
    </source>
</evidence>
<sequence>MNISRSSGLMRQFLLQPLRKGCDISCLGRSSWRMSRSFSGSSVLNEINLSRTKNLFLNDCKFNKNSFEKFFARRLSNSVAPTPGGILQETEKIPSKKVAFWLLGSSALVLAIVVVGGITRLTESGLSITEWKPITGVIPPLTDEQWNQEFELYKKSPEFEKLNSHMTVDEFKNIFFWEWFHRVLGRGIGLTILLPSIYMIVTKRASPWLSKRLIGLTGLVGLQGVIGWWMVKSGLSEELFSDGSHPRVSHYRLATHLAAAVALYIGLVWTGHGILQRHAFLKSMKSGSTSQLTSMVSSVQKMKGFRTSVNSFVGLVLITLLSGAFVAGLDAGMIYCTFPEMGEGRLAPSKSELFDQRFCRKDDKSDLIWRNMIDNPSLVQLEHRILAITTFVAACGLFIFSRAKRNILPKKIKTSINVVTGVVTAQATLGIMTLIYVVPVPLAALHQAGSLVTLTAALSLAQRLHPEYALKNIRSWTKLISSPPKSSISSSILTQQRQFHTFRPSFHSEIKKPLPGTGIKVFFVTPEGREIMIEGNEEGACEGSVACSTCHVIVDPEHYELLDPPEEDEEDMLDLAFGLEETSRLGCQVLLRKDLDGIRVRIPAQTRNIRLERPKA</sequence>
<name>ETP1_SCHPO</name>
<reference key="1">
    <citation type="journal article" date="2002" name="Biochemistry">
        <title>Functional expression of human mitochondrial CYP11B2 in fission yeast and identification of a new internal electron transfer protein, etp1.</title>
        <authorList>
            <person name="Bureik M."/>
            <person name="Schiffler B."/>
            <person name="Hiraoka Y."/>
            <person name="Vogel F."/>
            <person name="Bernhardt R."/>
        </authorList>
    </citation>
    <scope>NUCLEOTIDE SEQUENCE [GENOMIC DNA]</scope>
    <scope>FUNCTION</scope>
    <scope>SUBCELLULAR LOCATION</scope>
    <scope>PROTEOLYTIC CLEAVAGE</scope>
</reference>
<reference key="2">
    <citation type="journal article" date="2002" name="Nature">
        <title>The genome sequence of Schizosaccharomyces pombe.</title>
        <authorList>
            <person name="Wood V."/>
            <person name="Gwilliam R."/>
            <person name="Rajandream M.A."/>
            <person name="Lyne M.H."/>
            <person name="Lyne R."/>
            <person name="Stewart A."/>
            <person name="Sgouros J.G."/>
            <person name="Peat N."/>
            <person name="Hayles J."/>
            <person name="Baker S.G."/>
            <person name="Basham D."/>
            <person name="Bowman S."/>
            <person name="Brooks K."/>
            <person name="Brown D."/>
            <person name="Brown S."/>
            <person name="Chillingworth T."/>
            <person name="Churcher C.M."/>
            <person name="Collins M."/>
            <person name="Connor R."/>
            <person name="Cronin A."/>
            <person name="Davis P."/>
            <person name="Feltwell T."/>
            <person name="Fraser A."/>
            <person name="Gentles S."/>
            <person name="Goble A."/>
            <person name="Hamlin N."/>
            <person name="Harris D.E."/>
            <person name="Hidalgo J."/>
            <person name="Hodgson G."/>
            <person name="Holroyd S."/>
            <person name="Hornsby T."/>
            <person name="Howarth S."/>
            <person name="Huckle E.J."/>
            <person name="Hunt S."/>
            <person name="Jagels K."/>
            <person name="James K.D."/>
            <person name="Jones L."/>
            <person name="Jones M."/>
            <person name="Leather S."/>
            <person name="McDonald S."/>
            <person name="McLean J."/>
            <person name="Mooney P."/>
            <person name="Moule S."/>
            <person name="Mungall K.L."/>
            <person name="Murphy L.D."/>
            <person name="Niblett D."/>
            <person name="Odell C."/>
            <person name="Oliver K."/>
            <person name="O'Neil S."/>
            <person name="Pearson D."/>
            <person name="Quail M.A."/>
            <person name="Rabbinowitsch E."/>
            <person name="Rutherford K.M."/>
            <person name="Rutter S."/>
            <person name="Saunders D."/>
            <person name="Seeger K."/>
            <person name="Sharp S."/>
            <person name="Skelton J."/>
            <person name="Simmonds M.N."/>
            <person name="Squares R."/>
            <person name="Squares S."/>
            <person name="Stevens K."/>
            <person name="Taylor K."/>
            <person name="Taylor R.G."/>
            <person name="Tivey A."/>
            <person name="Walsh S.V."/>
            <person name="Warren T."/>
            <person name="Whitehead S."/>
            <person name="Woodward J.R."/>
            <person name="Volckaert G."/>
            <person name="Aert R."/>
            <person name="Robben J."/>
            <person name="Grymonprez B."/>
            <person name="Weltjens I."/>
            <person name="Vanstreels E."/>
            <person name="Rieger M."/>
            <person name="Schaefer M."/>
            <person name="Mueller-Auer S."/>
            <person name="Gabel C."/>
            <person name="Fuchs M."/>
            <person name="Duesterhoeft A."/>
            <person name="Fritzc C."/>
            <person name="Holzer E."/>
            <person name="Moestl D."/>
            <person name="Hilbert H."/>
            <person name="Borzym K."/>
            <person name="Langer I."/>
            <person name="Beck A."/>
            <person name="Lehrach H."/>
            <person name="Reinhardt R."/>
            <person name="Pohl T.M."/>
            <person name="Eger P."/>
            <person name="Zimmermann W."/>
            <person name="Wedler H."/>
            <person name="Wambutt R."/>
            <person name="Purnelle B."/>
            <person name="Goffeau A."/>
            <person name="Cadieu E."/>
            <person name="Dreano S."/>
            <person name="Gloux S."/>
            <person name="Lelaure V."/>
            <person name="Mottier S."/>
            <person name="Galibert F."/>
            <person name="Aves S.J."/>
            <person name="Xiang Z."/>
            <person name="Hunt C."/>
            <person name="Moore K."/>
            <person name="Hurst S.M."/>
            <person name="Lucas M."/>
            <person name="Rochet M."/>
            <person name="Gaillardin C."/>
            <person name="Tallada V.A."/>
            <person name="Garzon A."/>
            <person name="Thode G."/>
            <person name="Daga R.R."/>
            <person name="Cruzado L."/>
            <person name="Jimenez J."/>
            <person name="Sanchez M."/>
            <person name="del Rey F."/>
            <person name="Benito J."/>
            <person name="Dominguez A."/>
            <person name="Revuelta J.L."/>
            <person name="Moreno S."/>
            <person name="Armstrong J."/>
            <person name="Forsburg S.L."/>
            <person name="Cerutti L."/>
            <person name="Lowe T."/>
            <person name="McCombie W.R."/>
            <person name="Paulsen I."/>
            <person name="Potashkin J."/>
            <person name="Shpakovski G.V."/>
            <person name="Ussery D."/>
            <person name="Barrell B.G."/>
            <person name="Nurse P."/>
        </authorList>
    </citation>
    <scope>NUCLEOTIDE SEQUENCE [LARGE SCALE GENOMIC DNA]</scope>
    <source>
        <strain>972 / ATCC 24843</strain>
    </source>
</reference>
<reference key="3">
    <citation type="journal article" date="2004" name="J. Inorg. Biochem.">
        <title>The adrenodoxin-like ferredoxin of Schizosaccharomyces pombe mitochondria.</title>
        <authorList>
            <person name="Schiffler B."/>
            <person name="Bureik M."/>
            <person name="Reinle W."/>
            <person name="Mueller E.C."/>
            <person name="Hannemann F."/>
            <person name="Bernhardt R."/>
        </authorList>
    </citation>
    <scope>FUNCTION</scope>
    <scope>COFACTOR</scope>
</reference>
<reference key="4">
    <citation type="journal article" date="2006" name="Nat. Biotechnol.">
        <title>ORFeome cloning and global analysis of protein localization in the fission yeast Schizosaccharomyces pombe.</title>
        <authorList>
            <person name="Matsuyama A."/>
            <person name="Arai R."/>
            <person name="Yashiroda Y."/>
            <person name="Shirai A."/>
            <person name="Kamata A."/>
            <person name="Sekido S."/>
            <person name="Kobayashi Y."/>
            <person name="Hashimoto A."/>
            <person name="Hamamoto M."/>
            <person name="Hiraoka Y."/>
            <person name="Horinouchi S."/>
            <person name="Yoshida M."/>
        </authorList>
    </citation>
    <scope>SUBCELLULAR LOCATION [LARGE SCALE ANALYSIS]</scope>
</reference>
<reference key="5">
    <citation type="journal article" date="2008" name="FEMS Yeast Res.">
        <title>The endogenous adrenodoxin reductase-like flavoprotein arh1 supports heterologous cytochrome P450-dependent substrate conversions in Schizosaccharomyces pombe.</title>
        <authorList>
            <person name="Ewen K.M."/>
            <person name="Schiffler B."/>
            <person name="Uhlmann-Schiffler H."/>
            <person name="Bernhardt R."/>
            <person name="Hannemann F."/>
        </authorList>
    </citation>
    <scope>FUNCTION</scope>
</reference>
<reference key="6">
    <citation type="journal article" date="2011" name="J. Inorg. Biochem.">
        <title>Redox chemistry of the Schizosaccharomyces pombe ferredoxin electron-transfer domain and influence of Cys to Ser substitutions.</title>
        <authorList>
            <person name="Wu S.P."/>
            <person name="Bellei M."/>
            <person name="Mansy S.S."/>
            <person name="Battistuzzi G."/>
            <person name="Sola M."/>
            <person name="Cowan J.A."/>
        </authorList>
    </citation>
    <scope>FUNCTION</scope>
    <scope>COFACTOR</scope>
</reference>
<reference evidence="13" key="7">
    <citation type="journal article" date="2011" name="J. Inorg. Biochem.">
        <title>Structural and thermodynamic characterization of the adrenodoxin-like domain of the electron-transfer protein Etp1 from Schizosaccharomyces pombe.</title>
        <authorList>
            <person name="Mueller J.J."/>
            <person name="Hannemann F."/>
            <person name="Schiffler B."/>
            <person name="Ewen K.M."/>
            <person name="Kappl R."/>
            <person name="Heinemann U."/>
            <person name="Bernhardt R."/>
        </authorList>
    </citation>
    <scope>X-RAY CRYSTALLOGRAPHY (2.60 ANGSTROMS) OF 516-603 IN COMPLEX WITH [2FE-2S] CLUSTER</scope>
</reference>
<feature type="transit peptide" description="Mitochondrion" evidence="4">
    <location>
        <begin position="1"/>
        <end position="45"/>
    </location>
</feature>
<feature type="chain" id="PRO_0000006079" description="Heme A synthase-mitochondrial ferredoxin fusion protein" evidence="4">
    <location>
        <begin position="46"/>
        <end position="616"/>
    </location>
</feature>
<feature type="chain" id="PRO_0000460045" description="Heme A synthase etp1(cd)">
    <location>
        <begin position="46"/>
        <end status="unknown"/>
    </location>
</feature>
<feature type="chain" id="PRO_0000460046" description="Mitochondrial ferredoxin etp1(fd)">
    <location>
        <begin status="unknown"/>
        <end position="616"/>
    </location>
</feature>
<feature type="topological domain" description="Mitochondrial matrix" evidence="2">
    <location>
        <begin position="46"/>
        <end position="97"/>
    </location>
</feature>
<feature type="transmembrane region" description="Helical; Name=1" evidence="4">
    <location>
        <begin position="98"/>
        <end position="118"/>
    </location>
</feature>
<feature type="topological domain" description="Mitochondrial intermembrane" evidence="2">
    <location>
        <begin position="119"/>
        <end position="182"/>
    </location>
</feature>
<feature type="transmembrane region" description="Helical; Name=2" evidence="4">
    <location>
        <begin position="183"/>
        <end position="203"/>
    </location>
</feature>
<feature type="topological domain" description="Mitochondrial matrix" evidence="2">
    <location>
        <begin position="204"/>
        <end position="212"/>
    </location>
</feature>
<feature type="transmembrane region" description="Helical; Name=3" evidence="4">
    <location>
        <begin position="213"/>
        <end position="233"/>
    </location>
</feature>
<feature type="topological domain" description="Mitochondrial intermembrane" evidence="2">
    <location>
        <begin position="234"/>
        <end position="254"/>
    </location>
</feature>
<feature type="transmembrane region" description="Helical; Name=4" evidence="4">
    <location>
        <begin position="255"/>
        <end position="275"/>
    </location>
</feature>
<feature type="topological domain" description="Mitochondrial matrix" evidence="2">
    <location>
        <begin position="276"/>
        <end position="311"/>
    </location>
</feature>
<feature type="transmembrane region" description="Helical; Name=5" evidence="4">
    <location>
        <begin position="312"/>
        <end position="332"/>
    </location>
</feature>
<feature type="topological domain" description="Mitochondrial intermembrane" evidence="2">
    <location>
        <begin position="333"/>
        <end position="380"/>
    </location>
</feature>
<feature type="transmembrane region" description="Helical; Name=6" evidence="4">
    <location>
        <begin position="381"/>
        <end position="401"/>
    </location>
</feature>
<feature type="topological domain" description="Mitochondrial matrix" evidence="2">
    <location>
        <begin position="402"/>
        <end position="417"/>
    </location>
</feature>
<feature type="transmembrane region" description="Helical; Name=7" evidence="4">
    <location>
        <begin position="418"/>
        <end position="438"/>
    </location>
</feature>
<feature type="topological domain" description="Mitochondrial intermembrane" evidence="2">
    <location>
        <position position="439"/>
    </location>
</feature>
<feature type="transmembrane region" description="Helical; Name=8" evidence="4">
    <location>
        <begin position="440"/>
        <end position="460"/>
    </location>
</feature>
<feature type="topological domain" description="Mitochondrial matrix" evidence="2">
    <location>
        <begin position="461"/>
        <end position="616"/>
    </location>
</feature>
<feature type="domain" description="2Fe-2S ferredoxin-type" evidence="5">
    <location>
        <begin position="502"/>
        <end position="606"/>
    </location>
</feature>
<feature type="region of interest" description="Heme a synthase cox15-like" evidence="12">
    <location>
        <begin position="45"/>
        <end position="465"/>
    </location>
</feature>
<feature type="region of interest" description="Mitochondrial ferredoxin yah1-like" evidence="12">
    <location>
        <begin position="516"/>
        <end position="616"/>
    </location>
</feature>
<feature type="binding site" description="axial binding residue" evidence="1">
    <location>
        <position position="181"/>
    </location>
    <ligand>
        <name>heme o</name>
        <dbReference type="ChEBI" id="CHEBI:24480"/>
    </ligand>
    <ligandPart>
        <name>Fe</name>
        <dbReference type="ChEBI" id="CHEBI:18248"/>
    </ligandPart>
</feature>
<feature type="binding site" description="axial binding residue" evidence="1">
    <location>
        <position position="256"/>
    </location>
    <ligand>
        <name>heme o</name>
        <dbReference type="ChEBI" id="CHEBI:24480"/>
    </ligand>
    <ligandPart>
        <name>Fe</name>
        <dbReference type="ChEBI" id="CHEBI:18248"/>
    </ligandPart>
</feature>
<feature type="binding site" description="axial binding residue" evidence="1">
    <location>
        <position position="383"/>
    </location>
    <ligand>
        <name>heme b</name>
        <dbReference type="ChEBI" id="CHEBI:60344"/>
    </ligand>
    <ligandPart>
        <name>Fe</name>
        <dbReference type="ChEBI" id="CHEBI:18248"/>
    </ligandPart>
</feature>
<feature type="binding site" description="axial binding residue" evidence="1">
    <location>
        <position position="446"/>
    </location>
    <ligand>
        <name>heme b</name>
        <dbReference type="ChEBI" id="CHEBI:60344"/>
    </ligand>
    <ligandPart>
        <name>Fe</name>
        <dbReference type="ChEBI" id="CHEBI:18248"/>
    </ligandPart>
</feature>
<feature type="binding site" evidence="10 13">
    <location>
        <position position="541"/>
    </location>
    <ligand>
        <name>[2Fe-2S] cluster</name>
        <dbReference type="ChEBI" id="CHEBI:190135"/>
    </ligand>
</feature>
<feature type="binding site" evidence="10 13">
    <location>
        <position position="547"/>
    </location>
    <ligand>
        <name>[2Fe-2S] cluster</name>
        <dbReference type="ChEBI" id="CHEBI:190135"/>
    </ligand>
</feature>
<feature type="binding site" evidence="10 13">
    <location>
        <position position="550"/>
    </location>
    <ligand>
        <name>[2Fe-2S] cluster</name>
        <dbReference type="ChEBI" id="CHEBI:190135"/>
    </ligand>
</feature>
<feature type="binding site" evidence="10 13">
    <location>
        <position position="587"/>
    </location>
    <ligand>
        <name>[2Fe-2S] cluster</name>
        <dbReference type="ChEBI" id="CHEBI:190135"/>
    </ligand>
</feature>
<feature type="sequence conflict" description="In Ref. 1; no nucleotide entry." ref="1">
    <original>P</original>
    <variation>S</variation>
    <location>
        <position position="94"/>
    </location>
</feature>
<feature type="sequence conflict" description="In Ref. 1; no nucleotide entry." ref="1">
    <original>I</original>
    <variation>T</variation>
    <location>
        <position position="112"/>
    </location>
</feature>
<feature type="sequence conflict" description="In Ref. 1; no nucleotide entry." ref="1">
    <original>A</original>
    <variation>V</variation>
    <location>
        <position position="443"/>
    </location>
</feature>
<feature type="strand" evidence="14">
    <location>
        <begin position="519"/>
        <end position="524"/>
    </location>
</feature>
<feature type="strand" evidence="14">
    <location>
        <begin position="530"/>
        <end position="535"/>
    </location>
</feature>
<feature type="turn" evidence="14">
    <location>
        <begin position="540"/>
        <end position="543"/>
    </location>
</feature>
<feature type="strand" evidence="14">
    <location>
        <begin position="551"/>
        <end position="554"/>
    </location>
</feature>
<feature type="helix" evidence="14">
    <location>
        <begin position="556"/>
        <end position="561"/>
    </location>
</feature>
<feature type="helix" evidence="14">
    <location>
        <begin position="567"/>
        <end position="573"/>
    </location>
</feature>
<feature type="strand" evidence="14">
    <location>
        <begin position="583"/>
        <end position="585"/>
    </location>
</feature>
<feature type="turn" evidence="14">
    <location>
        <begin position="586"/>
        <end position="588"/>
    </location>
</feature>
<feature type="helix" evidence="14">
    <location>
        <begin position="593"/>
        <end position="595"/>
    </location>
</feature>
<feature type="strand" evidence="14">
    <location>
        <begin position="598"/>
        <end position="601"/>
    </location>
</feature>
<comment type="function">
    <molecule>Heme A synthase etp1(cd)</molecule>
    <text evidence="2">Catalyzes the second reaction in the biosynthesis of heme A, a prosthetic group of mitochondrial cytochrome c oxidase (CcO). Heme A is synthesized from heme B by two sequential enzymatic reactions catalyzed by heme O synthase (HOS) and heme A synthase (HAS). HAS catalyzes the conversion of heme O to heme A by two successive hydroxylations of the methyl group at C8, in a reaction that involves matrix ferredoxin and ferredoxin reductase. The first hydroxylation forms heme I, the second hydroxylation results in an unstable dihydroxymethyl group, which spontaneously dehydrates, resulting in the formyl group of heme A.</text>
</comment>
<comment type="function">
    <molecule>Mitochondrial ferredoxin etp1(fd)</molecule>
    <text evidence="3 6 7">Iron-sulfur protein that transfers electrons in a wide variety of metabolic reactions. Involved in heme A biosynthesis and in iron-sulfur cluster assembly (PubMed:11841224, PubMed:15219990). Transfers electrons from adrenodoxin reductase arh1 to heme A synthase etp1(cd), a heme protein that catalyzes the conversion of heme O to heme A. Required for the de novo synthesis of Fe-S clusters on iron sulfur cluster assembly protein isu1. Interact in its reduced state with isu1 to productively deliver electrons for Fe-S cluster synthesis. Essential for coenzyme Q biosynthesis. May transfer the electrons required for the hydroxylation reaction performed by coq6 (By similarity).</text>
</comment>
<comment type="catalytic activity">
    <molecule>Heme A synthase etp1(cd)</molecule>
    <reaction evidence="2">
        <text>Fe(II)-heme o + 2 A + H2O = Fe(II)-heme a + 2 AH2</text>
        <dbReference type="Rhea" id="RHEA:63388"/>
        <dbReference type="ChEBI" id="CHEBI:13193"/>
        <dbReference type="ChEBI" id="CHEBI:15377"/>
        <dbReference type="ChEBI" id="CHEBI:17499"/>
        <dbReference type="ChEBI" id="CHEBI:60530"/>
        <dbReference type="ChEBI" id="CHEBI:61715"/>
        <dbReference type="EC" id="1.17.99.9"/>
    </reaction>
    <physiologicalReaction direction="left-to-right" evidence="2">
        <dbReference type="Rhea" id="RHEA:63389"/>
    </physiologicalReaction>
</comment>
<comment type="cofactor">
    <molecule>Heme A synthase etp1(cd)</molecule>
    <cofactor evidence="2">
        <name>heme b</name>
        <dbReference type="ChEBI" id="CHEBI:60344"/>
    </cofactor>
</comment>
<comment type="cofactor">
    <molecule>Mitochondrial ferredoxin etp1(fd)</molecule>
    <cofactor evidence="7 9 10">
        <name>[2Fe-2S] cluster</name>
        <dbReference type="ChEBI" id="CHEBI:190135"/>
    </cofactor>
    <text evidence="10">Binds 1 [2Fe-2S] cluster.</text>
</comment>
<comment type="pathway">
    <text evidence="2">Porphyrin-containing compound metabolism; heme A biosynthesis; heme A from heme O: step 1/1.</text>
</comment>
<comment type="subunit">
    <molecule>Mitochondrial ferredoxin etp1(fd)</molecule>
    <text evidence="7">Homodimer.</text>
</comment>
<comment type="subcellular location">
    <molecule>Heme A synthase etp1(cd)</molecule>
    <subcellularLocation>
        <location evidence="6">Mitochondrion inner membrane</location>
        <topology evidence="4">Multi-pass membrane protein</topology>
    </subcellularLocation>
</comment>
<comment type="subcellular location">
    <molecule>Mitochondrial ferredoxin etp1(fd)</molecule>
    <subcellularLocation>
        <location evidence="6 8">Mitochondrion matrix</location>
    </subcellularLocation>
</comment>
<comment type="domain">
    <molecule>Heme A synthase etp1(cd)</molecule>
    <text evidence="1">The N-half (TM1-TM4) and C-half (TM5-TM8) domains are connected by an intracellular loop. Each domain is formed from four-helix bundles and they align in a pseudo twofold symmetry manner. The N-half domain is the substrate heme O binding domain and the C-half domain is the cofactor heme B binding domain.</text>
</comment>
<comment type="PTM">
    <text evidence="6">The etp1 preprotein is cleaved into 2 chains after imort into mitochondria. The N-terminal chain containing a heme A synthase cox15-like domain etp1(cd) is a subunit of the membrane-embedded cytochrome c oxidase complex and functions in the respiratory chain. The C-terminal chain containing a ferredoxin yah1-like domain etp1(fd) is released and serves in the matrix as electron transfer protein.</text>
</comment>
<comment type="similarity">
    <text evidence="12">In the N-terminal section; belongs to the COX15/CtaA family. Type 2 subfamily.</text>
</comment>
<comment type="similarity">
    <text evidence="12">In the C-terminal section; belongs to the adrenodoxin/putidaredoxin family.</text>
</comment>
<keyword id="KW-0001">2Fe-2S</keyword>
<keyword id="KW-0002">3D-structure</keyword>
<keyword id="KW-0249">Electron transport</keyword>
<keyword id="KW-0350">Heme biosynthesis</keyword>
<keyword id="KW-0408">Iron</keyword>
<keyword id="KW-0411">Iron-sulfur</keyword>
<keyword id="KW-0472">Membrane</keyword>
<keyword id="KW-0479">Metal-binding</keyword>
<keyword id="KW-0496">Mitochondrion</keyword>
<keyword id="KW-0999">Mitochondrion inner membrane</keyword>
<keyword id="KW-0560">Oxidoreductase</keyword>
<keyword id="KW-1185">Reference proteome</keyword>
<keyword id="KW-0809">Transit peptide</keyword>
<keyword id="KW-0812">Transmembrane</keyword>
<keyword id="KW-1133">Transmembrane helix</keyword>
<keyword id="KW-0813">Transport</keyword>
<accession>Q10361</accession>
<dbReference type="EC" id="1.17.99.9" evidence="2"/>
<dbReference type="EMBL" id="CU329670">
    <property type="protein sequence ID" value="CAA93897.2"/>
    <property type="molecule type" value="Genomic_DNA"/>
</dbReference>
<dbReference type="PIR" id="T38167">
    <property type="entry name" value="T38167"/>
</dbReference>
<dbReference type="RefSeq" id="NP_594836.2">
    <property type="nucleotide sequence ID" value="NM_001020265.3"/>
</dbReference>
<dbReference type="PDB" id="2WLB">
    <property type="method" value="X-ray"/>
    <property type="resolution" value="2.60 A"/>
    <property type="chains" value="A/B=516-603"/>
</dbReference>
<dbReference type="PDBsum" id="2WLB"/>
<dbReference type="SMR" id="Q10361"/>
<dbReference type="BioGRID" id="278330">
    <property type="interactions" value="1"/>
</dbReference>
<dbReference type="FunCoup" id="Q10361">
    <property type="interactions" value="624"/>
</dbReference>
<dbReference type="STRING" id="284812.Q10361"/>
<dbReference type="iPTMnet" id="Q10361"/>
<dbReference type="PaxDb" id="4896-SPAC22E12.10c.1"/>
<dbReference type="EnsemblFungi" id="SPAC22E12.10c.1">
    <property type="protein sequence ID" value="SPAC22E12.10c.1:pep"/>
    <property type="gene ID" value="SPAC22E12.10c"/>
</dbReference>
<dbReference type="GeneID" id="2541839"/>
<dbReference type="KEGG" id="spo:2541839"/>
<dbReference type="PomBase" id="SPAC22E12.10c">
    <property type="gene designation" value="etp1"/>
</dbReference>
<dbReference type="VEuPathDB" id="FungiDB:SPAC22E12.10c"/>
<dbReference type="eggNOG" id="KOG2725">
    <property type="taxonomic scope" value="Eukaryota"/>
</dbReference>
<dbReference type="eggNOG" id="KOG3309">
    <property type="taxonomic scope" value="Eukaryota"/>
</dbReference>
<dbReference type="HOGENOM" id="CLU_017627_3_0_1"/>
<dbReference type="InParanoid" id="Q10361"/>
<dbReference type="OMA" id="HPRVSHY"/>
<dbReference type="PhylomeDB" id="Q10361"/>
<dbReference type="Reactome" id="R-SPO-189451">
    <property type="pathway name" value="Heme biosynthesis"/>
</dbReference>
<dbReference type="UniPathway" id="UPA00269">
    <property type="reaction ID" value="UER00713"/>
</dbReference>
<dbReference type="EvolutionaryTrace" id="Q10361"/>
<dbReference type="PRO" id="PR:Q10361"/>
<dbReference type="Proteomes" id="UP000002485">
    <property type="component" value="Chromosome I"/>
</dbReference>
<dbReference type="GO" id="GO:0099128">
    <property type="term" value="C:mitochondrial [2Fe-2S] assembly complex"/>
    <property type="evidence" value="ECO:0000304"/>
    <property type="project" value="PomBase"/>
</dbReference>
<dbReference type="GO" id="GO:0005743">
    <property type="term" value="C:mitochondrial inner membrane"/>
    <property type="evidence" value="ECO:0000314"/>
    <property type="project" value="PomBase"/>
</dbReference>
<dbReference type="GO" id="GO:0005759">
    <property type="term" value="C:mitochondrial matrix"/>
    <property type="evidence" value="ECO:0000314"/>
    <property type="project" value="PomBase"/>
</dbReference>
<dbReference type="GO" id="GO:0005739">
    <property type="term" value="C:mitochondrion"/>
    <property type="evidence" value="ECO:0007005"/>
    <property type="project" value="PomBase"/>
</dbReference>
<dbReference type="GO" id="GO:0051537">
    <property type="term" value="F:2 iron, 2 sulfur cluster binding"/>
    <property type="evidence" value="ECO:0000314"/>
    <property type="project" value="PomBase"/>
</dbReference>
<dbReference type="GO" id="GO:0051536">
    <property type="term" value="F:iron-sulfur cluster binding"/>
    <property type="evidence" value="ECO:0000314"/>
    <property type="project" value="PomBase"/>
</dbReference>
<dbReference type="GO" id="GO:0046872">
    <property type="term" value="F:metal ion binding"/>
    <property type="evidence" value="ECO:0007669"/>
    <property type="project" value="UniProtKB-KW"/>
</dbReference>
<dbReference type="GO" id="GO:0003958">
    <property type="term" value="F:NADPH-hemoprotein reductase activity"/>
    <property type="evidence" value="ECO:0000315"/>
    <property type="project" value="PomBase"/>
</dbReference>
<dbReference type="GO" id="GO:0016651">
    <property type="term" value="F:oxidoreductase activity, acting on NAD(P)H"/>
    <property type="evidence" value="ECO:0000314"/>
    <property type="project" value="PomBase"/>
</dbReference>
<dbReference type="GO" id="GO:0016653">
    <property type="term" value="F:oxidoreductase activity, acting on NAD(P)H, heme protein as acceptor"/>
    <property type="evidence" value="ECO:0000318"/>
    <property type="project" value="GO_Central"/>
</dbReference>
<dbReference type="GO" id="GO:0044571">
    <property type="term" value="P:[2Fe-2S] cluster assembly"/>
    <property type="evidence" value="ECO:0000305"/>
    <property type="project" value="PomBase"/>
</dbReference>
<dbReference type="GO" id="GO:0006784">
    <property type="term" value="P:heme A biosynthetic process"/>
    <property type="evidence" value="ECO:0000315"/>
    <property type="project" value="PomBase"/>
</dbReference>
<dbReference type="GO" id="GO:0140647">
    <property type="term" value="P:P450-containing electron transport chain"/>
    <property type="evidence" value="ECO:0007669"/>
    <property type="project" value="InterPro"/>
</dbReference>
<dbReference type="CDD" id="cd00207">
    <property type="entry name" value="fer2"/>
    <property type="match status" value="1"/>
</dbReference>
<dbReference type="Gene3D" id="3.10.20.30">
    <property type="match status" value="1"/>
</dbReference>
<dbReference type="HAMAP" id="MF_01665">
    <property type="entry name" value="HemeA_synth_type2"/>
    <property type="match status" value="1"/>
</dbReference>
<dbReference type="InterPro" id="IPR036010">
    <property type="entry name" value="2Fe-2S_ferredoxin-like_sf"/>
</dbReference>
<dbReference type="InterPro" id="IPR001041">
    <property type="entry name" value="2Fe-2S_ferredoxin-type"/>
</dbReference>
<dbReference type="InterPro" id="IPR001055">
    <property type="entry name" value="Adrenodoxin-like"/>
</dbReference>
<dbReference type="InterPro" id="IPR018298">
    <property type="entry name" value="Adrenodoxin_Fe-S_BS"/>
</dbReference>
<dbReference type="InterPro" id="IPR012675">
    <property type="entry name" value="Beta-grasp_dom_sf"/>
</dbReference>
<dbReference type="InterPro" id="IPR003780">
    <property type="entry name" value="COX15/CtaA_fam"/>
</dbReference>
<dbReference type="InterPro" id="IPR023754">
    <property type="entry name" value="HemeA_Synthase_type2"/>
</dbReference>
<dbReference type="PANTHER" id="PTHR23289">
    <property type="entry name" value="CYTOCHROME C OXIDASE ASSEMBLY PROTEIN COX15"/>
    <property type="match status" value="1"/>
</dbReference>
<dbReference type="PANTHER" id="PTHR23289:SF2">
    <property type="entry name" value="CYTOCHROME C OXIDASE ASSEMBLY PROTEIN COX15 HOMOLOG"/>
    <property type="match status" value="1"/>
</dbReference>
<dbReference type="Pfam" id="PF02628">
    <property type="entry name" value="COX15-CtaA"/>
    <property type="match status" value="1"/>
</dbReference>
<dbReference type="Pfam" id="PF00111">
    <property type="entry name" value="Fer2"/>
    <property type="match status" value="1"/>
</dbReference>
<dbReference type="PRINTS" id="PR00355">
    <property type="entry name" value="ADRENODOXIN"/>
</dbReference>
<dbReference type="SUPFAM" id="SSF54292">
    <property type="entry name" value="2Fe-2S ferredoxin-like"/>
    <property type="match status" value="1"/>
</dbReference>
<dbReference type="PROSITE" id="PS00814">
    <property type="entry name" value="ADX"/>
    <property type="match status" value="1"/>
</dbReference>
<proteinExistence type="evidence at protein level"/>
<protein>
    <recommendedName>
        <fullName evidence="12">Heme A synthase-mitochondrial ferredoxin fusion protein</fullName>
    </recommendedName>
    <alternativeName>
        <fullName>Electron transfer protein 1</fullName>
    </alternativeName>
    <component>
        <recommendedName>
            <fullName>Heme A synthase etp1(cd)</fullName>
            <shortName>HAS</shortName>
            <ecNumber evidence="2">1.17.99.9</ecNumber>
        </recommendedName>
        <alternativeName>
            <fullName>Electron transfer protein cox15-like domain</fullName>
        </alternativeName>
    </component>
    <component>
        <recommendedName>
            <fullName>Mitochondrial ferredoxin etp1(fd)</fullName>
        </recommendedName>
        <alternativeName>
            <fullName>Adrenodoxin homolog</fullName>
        </alternativeName>
        <alternativeName>
            <fullName>Electron transfer protein ferredoxin domain</fullName>
        </alternativeName>
    </component>
</protein>
<organism>
    <name type="scientific">Schizosaccharomyces pombe (strain 972 / ATCC 24843)</name>
    <name type="common">Fission yeast</name>
    <dbReference type="NCBI Taxonomy" id="284812"/>
    <lineage>
        <taxon>Eukaryota</taxon>
        <taxon>Fungi</taxon>
        <taxon>Dikarya</taxon>
        <taxon>Ascomycota</taxon>
        <taxon>Taphrinomycotina</taxon>
        <taxon>Schizosaccharomycetes</taxon>
        <taxon>Schizosaccharomycetales</taxon>
        <taxon>Schizosaccharomycetaceae</taxon>
        <taxon>Schizosaccharomyces</taxon>
    </lineage>
</organism>